<feature type="chain" id="PRO_0000347652" description="Alanine--tRNA ligase">
    <location>
        <begin position="1"/>
        <end position="872"/>
    </location>
</feature>
<feature type="binding site" evidence="1">
    <location>
        <position position="566"/>
    </location>
    <ligand>
        <name>Zn(2+)</name>
        <dbReference type="ChEBI" id="CHEBI:29105"/>
    </ligand>
</feature>
<feature type="binding site" evidence="1">
    <location>
        <position position="570"/>
    </location>
    <ligand>
        <name>Zn(2+)</name>
        <dbReference type="ChEBI" id="CHEBI:29105"/>
    </ligand>
</feature>
<feature type="binding site" evidence="1">
    <location>
        <position position="668"/>
    </location>
    <ligand>
        <name>Zn(2+)</name>
        <dbReference type="ChEBI" id="CHEBI:29105"/>
    </ligand>
</feature>
<feature type="binding site" evidence="1">
    <location>
        <position position="672"/>
    </location>
    <ligand>
        <name>Zn(2+)</name>
        <dbReference type="ChEBI" id="CHEBI:29105"/>
    </ligand>
</feature>
<reference key="1">
    <citation type="journal article" date="2006" name="Proc. Natl. Acad. Sci. U.S.A.">
        <title>Comparative genomics of the lactic acid bacteria.</title>
        <authorList>
            <person name="Makarova K.S."/>
            <person name="Slesarev A."/>
            <person name="Wolf Y.I."/>
            <person name="Sorokin A."/>
            <person name="Mirkin B."/>
            <person name="Koonin E.V."/>
            <person name="Pavlov A."/>
            <person name="Pavlova N."/>
            <person name="Karamychev V."/>
            <person name="Polouchine N."/>
            <person name="Shakhova V."/>
            <person name="Grigoriev I."/>
            <person name="Lou Y."/>
            <person name="Rohksar D."/>
            <person name="Lucas S."/>
            <person name="Huang K."/>
            <person name="Goodstein D.M."/>
            <person name="Hawkins T."/>
            <person name="Plengvidhya V."/>
            <person name="Welker D."/>
            <person name="Hughes J."/>
            <person name="Goh Y."/>
            <person name="Benson A."/>
            <person name="Baldwin K."/>
            <person name="Lee J.-H."/>
            <person name="Diaz-Muniz I."/>
            <person name="Dosti B."/>
            <person name="Smeianov V."/>
            <person name="Wechter W."/>
            <person name="Barabote R."/>
            <person name="Lorca G."/>
            <person name="Altermann E."/>
            <person name="Barrangou R."/>
            <person name="Ganesan B."/>
            <person name="Xie Y."/>
            <person name="Rawsthorne H."/>
            <person name="Tamir D."/>
            <person name="Parker C."/>
            <person name="Breidt F."/>
            <person name="Broadbent J.R."/>
            <person name="Hutkins R."/>
            <person name="O'Sullivan D."/>
            <person name="Steele J."/>
            <person name="Unlu G."/>
            <person name="Saier M.H. Jr."/>
            <person name="Klaenhammer T."/>
            <person name="Richardson P."/>
            <person name="Kozyavkin S."/>
            <person name="Weimer B.C."/>
            <person name="Mills D.A."/>
        </authorList>
    </citation>
    <scope>NUCLEOTIDE SEQUENCE [LARGE SCALE GENOMIC DNA]</scope>
    <source>
        <strain>SK11</strain>
    </source>
</reference>
<keyword id="KW-0030">Aminoacyl-tRNA synthetase</keyword>
<keyword id="KW-0067">ATP-binding</keyword>
<keyword id="KW-0963">Cytoplasm</keyword>
<keyword id="KW-0436">Ligase</keyword>
<keyword id="KW-0479">Metal-binding</keyword>
<keyword id="KW-0547">Nucleotide-binding</keyword>
<keyword id="KW-0648">Protein biosynthesis</keyword>
<keyword id="KW-0694">RNA-binding</keyword>
<keyword id="KW-0820">tRNA-binding</keyword>
<keyword id="KW-0862">Zinc</keyword>
<accession>Q02XE9</accession>
<gene>
    <name evidence="1" type="primary">alaS</name>
    <name type="ordered locus">LACR_1887</name>
</gene>
<protein>
    <recommendedName>
        <fullName evidence="1">Alanine--tRNA ligase</fullName>
        <ecNumber evidence="1">6.1.1.7</ecNumber>
    </recommendedName>
    <alternativeName>
        <fullName evidence="1">Alanyl-tRNA synthetase</fullName>
        <shortName evidence="1">AlaRS</shortName>
    </alternativeName>
</protein>
<proteinExistence type="inferred from homology"/>
<organism>
    <name type="scientific">Lactococcus lactis subsp. cremoris (strain SK11)</name>
    <dbReference type="NCBI Taxonomy" id="272622"/>
    <lineage>
        <taxon>Bacteria</taxon>
        <taxon>Bacillati</taxon>
        <taxon>Bacillota</taxon>
        <taxon>Bacilli</taxon>
        <taxon>Lactobacillales</taxon>
        <taxon>Streptococcaceae</taxon>
        <taxon>Lactococcus</taxon>
        <taxon>Lactococcus cremoris subsp. cremoris</taxon>
    </lineage>
</organism>
<evidence type="ECO:0000255" key="1">
    <source>
        <dbReference type="HAMAP-Rule" id="MF_00036"/>
    </source>
</evidence>
<dbReference type="EC" id="6.1.1.7" evidence="1"/>
<dbReference type="EMBL" id="CP000425">
    <property type="protein sequence ID" value="ABJ73373.1"/>
    <property type="molecule type" value="Genomic_DNA"/>
</dbReference>
<dbReference type="RefSeq" id="WP_011676721.1">
    <property type="nucleotide sequence ID" value="NC_008527.1"/>
</dbReference>
<dbReference type="SMR" id="Q02XE9"/>
<dbReference type="KEGG" id="llc:LACR_1887"/>
<dbReference type="HOGENOM" id="CLU_004485_1_1_9"/>
<dbReference type="Proteomes" id="UP000000240">
    <property type="component" value="Chromosome"/>
</dbReference>
<dbReference type="GO" id="GO:0005829">
    <property type="term" value="C:cytosol"/>
    <property type="evidence" value="ECO:0007669"/>
    <property type="project" value="TreeGrafter"/>
</dbReference>
<dbReference type="GO" id="GO:0004813">
    <property type="term" value="F:alanine-tRNA ligase activity"/>
    <property type="evidence" value="ECO:0007669"/>
    <property type="project" value="UniProtKB-UniRule"/>
</dbReference>
<dbReference type="GO" id="GO:0002161">
    <property type="term" value="F:aminoacyl-tRNA deacylase activity"/>
    <property type="evidence" value="ECO:0007669"/>
    <property type="project" value="TreeGrafter"/>
</dbReference>
<dbReference type="GO" id="GO:0005524">
    <property type="term" value="F:ATP binding"/>
    <property type="evidence" value="ECO:0007669"/>
    <property type="project" value="UniProtKB-UniRule"/>
</dbReference>
<dbReference type="GO" id="GO:0140096">
    <property type="term" value="F:catalytic activity, acting on a protein"/>
    <property type="evidence" value="ECO:0007669"/>
    <property type="project" value="UniProtKB-ARBA"/>
</dbReference>
<dbReference type="GO" id="GO:0016740">
    <property type="term" value="F:transferase activity"/>
    <property type="evidence" value="ECO:0007669"/>
    <property type="project" value="UniProtKB-ARBA"/>
</dbReference>
<dbReference type="GO" id="GO:0000049">
    <property type="term" value="F:tRNA binding"/>
    <property type="evidence" value="ECO:0007669"/>
    <property type="project" value="UniProtKB-KW"/>
</dbReference>
<dbReference type="GO" id="GO:0008270">
    <property type="term" value="F:zinc ion binding"/>
    <property type="evidence" value="ECO:0007669"/>
    <property type="project" value="UniProtKB-UniRule"/>
</dbReference>
<dbReference type="GO" id="GO:0006419">
    <property type="term" value="P:alanyl-tRNA aminoacylation"/>
    <property type="evidence" value="ECO:0007669"/>
    <property type="project" value="UniProtKB-UniRule"/>
</dbReference>
<dbReference type="CDD" id="cd00673">
    <property type="entry name" value="AlaRS_core"/>
    <property type="match status" value="1"/>
</dbReference>
<dbReference type="FunFam" id="3.10.310.40:FF:000001">
    <property type="entry name" value="Alanine--tRNA ligase"/>
    <property type="match status" value="1"/>
</dbReference>
<dbReference type="FunFam" id="3.30.54.20:FF:000001">
    <property type="entry name" value="Alanine--tRNA ligase"/>
    <property type="match status" value="1"/>
</dbReference>
<dbReference type="FunFam" id="3.30.930.10:FF:000046">
    <property type="entry name" value="Alanine--tRNA ligase"/>
    <property type="match status" value="1"/>
</dbReference>
<dbReference type="FunFam" id="3.30.980.10:FF:000004">
    <property type="entry name" value="Alanine--tRNA ligase, cytoplasmic"/>
    <property type="match status" value="1"/>
</dbReference>
<dbReference type="Gene3D" id="2.40.30.130">
    <property type="match status" value="1"/>
</dbReference>
<dbReference type="Gene3D" id="3.10.310.40">
    <property type="match status" value="1"/>
</dbReference>
<dbReference type="Gene3D" id="3.30.54.20">
    <property type="match status" value="1"/>
</dbReference>
<dbReference type="Gene3D" id="6.10.250.550">
    <property type="match status" value="1"/>
</dbReference>
<dbReference type="Gene3D" id="3.30.930.10">
    <property type="entry name" value="Bira Bifunctional Protein, Domain 2"/>
    <property type="match status" value="1"/>
</dbReference>
<dbReference type="Gene3D" id="3.30.980.10">
    <property type="entry name" value="Threonyl-trna Synthetase, Chain A, domain 2"/>
    <property type="match status" value="1"/>
</dbReference>
<dbReference type="HAMAP" id="MF_00036_B">
    <property type="entry name" value="Ala_tRNA_synth_B"/>
    <property type="match status" value="1"/>
</dbReference>
<dbReference type="InterPro" id="IPR006195">
    <property type="entry name" value="aa-tRNA-synth_II"/>
</dbReference>
<dbReference type="InterPro" id="IPR045864">
    <property type="entry name" value="aa-tRNA-synth_II/BPL/LPL"/>
</dbReference>
<dbReference type="InterPro" id="IPR002318">
    <property type="entry name" value="Ala-tRNA-lgiase_IIc"/>
</dbReference>
<dbReference type="InterPro" id="IPR018162">
    <property type="entry name" value="Ala-tRNA-ligase_IIc_anticod-bd"/>
</dbReference>
<dbReference type="InterPro" id="IPR018165">
    <property type="entry name" value="Ala-tRNA-synth_IIc_core"/>
</dbReference>
<dbReference type="InterPro" id="IPR018164">
    <property type="entry name" value="Ala-tRNA-synth_IIc_N"/>
</dbReference>
<dbReference type="InterPro" id="IPR050058">
    <property type="entry name" value="Ala-tRNA_ligase"/>
</dbReference>
<dbReference type="InterPro" id="IPR023033">
    <property type="entry name" value="Ala_tRNA_ligase_euk/bac"/>
</dbReference>
<dbReference type="InterPro" id="IPR003156">
    <property type="entry name" value="DHHA1_dom"/>
</dbReference>
<dbReference type="InterPro" id="IPR018163">
    <property type="entry name" value="Thr/Ala-tRNA-synth_IIc_edit"/>
</dbReference>
<dbReference type="InterPro" id="IPR009000">
    <property type="entry name" value="Transl_B-barrel_sf"/>
</dbReference>
<dbReference type="InterPro" id="IPR012947">
    <property type="entry name" value="tRNA_SAD"/>
</dbReference>
<dbReference type="NCBIfam" id="TIGR00344">
    <property type="entry name" value="alaS"/>
    <property type="match status" value="1"/>
</dbReference>
<dbReference type="PANTHER" id="PTHR11777:SF9">
    <property type="entry name" value="ALANINE--TRNA LIGASE, CYTOPLASMIC"/>
    <property type="match status" value="1"/>
</dbReference>
<dbReference type="PANTHER" id="PTHR11777">
    <property type="entry name" value="ALANYL-TRNA SYNTHETASE"/>
    <property type="match status" value="1"/>
</dbReference>
<dbReference type="Pfam" id="PF02272">
    <property type="entry name" value="DHHA1"/>
    <property type="match status" value="1"/>
</dbReference>
<dbReference type="Pfam" id="PF01411">
    <property type="entry name" value="tRNA-synt_2c"/>
    <property type="match status" value="1"/>
</dbReference>
<dbReference type="Pfam" id="PF07973">
    <property type="entry name" value="tRNA_SAD"/>
    <property type="match status" value="1"/>
</dbReference>
<dbReference type="PRINTS" id="PR00980">
    <property type="entry name" value="TRNASYNTHALA"/>
</dbReference>
<dbReference type="SMART" id="SM00863">
    <property type="entry name" value="tRNA_SAD"/>
    <property type="match status" value="1"/>
</dbReference>
<dbReference type="SUPFAM" id="SSF55681">
    <property type="entry name" value="Class II aaRS and biotin synthetases"/>
    <property type="match status" value="1"/>
</dbReference>
<dbReference type="SUPFAM" id="SSF101353">
    <property type="entry name" value="Putative anticodon-binding domain of alanyl-tRNA synthetase (AlaRS)"/>
    <property type="match status" value="1"/>
</dbReference>
<dbReference type="SUPFAM" id="SSF55186">
    <property type="entry name" value="ThrRS/AlaRS common domain"/>
    <property type="match status" value="1"/>
</dbReference>
<dbReference type="SUPFAM" id="SSF50447">
    <property type="entry name" value="Translation proteins"/>
    <property type="match status" value="1"/>
</dbReference>
<dbReference type="PROSITE" id="PS50860">
    <property type="entry name" value="AA_TRNA_LIGASE_II_ALA"/>
    <property type="match status" value="1"/>
</dbReference>
<comment type="function">
    <text evidence="1">Catalyzes the attachment of alanine to tRNA(Ala) in a two-step reaction: alanine is first activated by ATP to form Ala-AMP and then transferred to the acceptor end of tRNA(Ala). Also edits incorrectly charged Ser-tRNA(Ala) and Gly-tRNA(Ala) via its editing domain.</text>
</comment>
<comment type="catalytic activity">
    <reaction evidence="1">
        <text>tRNA(Ala) + L-alanine + ATP = L-alanyl-tRNA(Ala) + AMP + diphosphate</text>
        <dbReference type="Rhea" id="RHEA:12540"/>
        <dbReference type="Rhea" id="RHEA-COMP:9657"/>
        <dbReference type="Rhea" id="RHEA-COMP:9923"/>
        <dbReference type="ChEBI" id="CHEBI:30616"/>
        <dbReference type="ChEBI" id="CHEBI:33019"/>
        <dbReference type="ChEBI" id="CHEBI:57972"/>
        <dbReference type="ChEBI" id="CHEBI:78442"/>
        <dbReference type="ChEBI" id="CHEBI:78497"/>
        <dbReference type="ChEBI" id="CHEBI:456215"/>
        <dbReference type="EC" id="6.1.1.7"/>
    </reaction>
</comment>
<comment type="cofactor">
    <cofactor evidence="1">
        <name>Zn(2+)</name>
        <dbReference type="ChEBI" id="CHEBI:29105"/>
    </cofactor>
    <text evidence="1">Binds 1 zinc ion per subunit.</text>
</comment>
<comment type="subcellular location">
    <subcellularLocation>
        <location evidence="1">Cytoplasm</location>
    </subcellularLocation>
</comment>
<comment type="domain">
    <text evidence="1">Consists of three domains; the N-terminal catalytic domain, the editing domain and the C-terminal C-Ala domain. The editing domain removes incorrectly charged amino acids, while the C-Ala domain, along with tRNA(Ala), serves as a bridge to cooperatively bring together the editing and aminoacylation centers thus stimulating deacylation of misacylated tRNAs.</text>
</comment>
<comment type="similarity">
    <text evidence="1">Belongs to the class-II aminoacyl-tRNA synthetase family.</text>
</comment>
<sequence length="872" mass="96224">MKTMTSAEVRQMFLDFFKSKGHTVEPSQSLVPVNDPTLLWINSGVATLKKYFDGSVVPENPRLTNAQKAIRTNDIENVGKTARHHTMFEMLGNFSIGDYFRNEAIAFAWELLTSSEWFEFPAEKLYITYYPADKDTYNRWVEVGVDPTHLVPIEDNFWEIGAGPSGPDTEIFFDRGEIYDPEHVGLKLLAEDIENDRYIEIWNIVLSQFNANPAIPRSEYPELPQKNIDTGMGLERMVCIIQGGKTNFDTDLFLPIIREIEKLSGITYSPDSENMSFKVIADHIRSLSFAIGDGALPGNEGRGYVLRRLLRRAVMHGKKLGIQGKFLASLVPTVGKIMQSYYPEVLEKEDFIMQIIDREEETFNRTIDAGQKLIDELLVNLKAEGKDRIEGADIFRLYDTYGFPVELTEELAEDEGFKIDHEGFKVAMKAQQDRARAAVVKGGSMGAQNETLSSIEVDSKFLYEDKKSQAKLLVAIKDDELVDEVTGKAQLVFDVTPFYAEMGGQVADHGVIKNADGQEVATVLDVQHAPHGQNLHSVETTSPLKVGETYTLEIDEERRSAVVKNHTATHLLHAALHNIVGNHALQAGSLNEVEFLRFDFTHFAQVTKEELAEIERQVNEVIWQSLKVETIETDIATAKEMGAMALFGEKYGKNVRVVKIGDYSIELCGGTHTQTTSQIGLFKIIKEEGIGSGVRRIIAVTGQKAYEAFKDAENTLSEVAGLVKAPQASQIVAKVSNLQDELKAAQKENDALAGKLAASQSDEIFKNVQRAGSVSFIASQVTVPDANGLRNLADIWKQKELSDVLVLVATIGEKVSLLVASKSSDVKAGNLVKELAPFVDGRGGGKPDMAMAGGSNAAGIPELLTAVAEKLG</sequence>
<name>SYA_LACLS</name>